<keyword id="KW-0165">Cleavage on pair of basic residues</keyword>
<keyword id="KW-1015">Disulfide bond</keyword>
<keyword id="KW-0872">Ion channel impairing toxin</keyword>
<keyword id="KW-0960">Knottin</keyword>
<keyword id="KW-0964">Secreted</keyword>
<keyword id="KW-0732">Signal</keyword>
<keyword id="KW-0800">Toxin</keyword>
<name>ICK32_TRILK</name>
<sequence length="116" mass="12987">MKTIIVFLSLLVLATKFGDAKEGVNQKQKKEVTQNEFREEYLNEMAAMSLVQQLEAIERALFENEAGRNSRQKRCNGKNVPCGANHSPCCSGLSCEETFGYGWLYKSPYCVIPSNG</sequence>
<feature type="signal peptide" evidence="2">
    <location>
        <begin position="1"/>
        <end position="20"/>
    </location>
</feature>
<feature type="propeptide" id="PRO_0000435155" evidence="3">
    <location>
        <begin position="21"/>
        <end position="74"/>
    </location>
</feature>
<feature type="chain" id="PRO_0000429239" description="U16-barytoxin-Tl1a">
    <location>
        <begin position="75"/>
        <end position="116"/>
    </location>
</feature>
<feature type="disulfide bond" evidence="1">
    <location>
        <begin position="75"/>
        <end position="90"/>
    </location>
</feature>
<feature type="disulfide bond" evidence="1">
    <location>
        <begin position="82"/>
        <end position="95"/>
    </location>
</feature>
<feature type="disulfide bond" evidence="1">
    <location>
        <begin position="89"/>
        <end position="110"/>
    </location>
</feature>
<dbReference type="EMBL" id="GAQE01000035">
    <property type="protein sequence ID" value="JAB84519.1"/>
    <property type="molecule type" value="Transcribed_RNA"/>
</dbReference>
<dbReference type="SMR" id="W4VRW4"/>
<dbReference type="ArachnoServer" id="AS001504">
    <property type="toxin name" value="U16-barytoxin-Tl1a"/>
</dbReference>
<dbReference type="GO" id="GO:0005576">
    <property type="term" value="C:extracellular region"/>
    <property type="evidence" value="ECO:0007669"/>
    <property type="project" value="UniProtKB-SubCell"/>
</dbReference>
<dbReference type="GO" id="GO:0019871">
    <property type="term" value="F:sodium channel inhibitor activity"/>
    <property type="evidence" value="ECO:0007669"/>
    <property type="project" value="InterPro"/>
</dbReference>
<dbReference type="GO" id="GO:0090729">
    <property type="term" value="F:toxin activity"/>
    <property type="evidence" value="ECO:0007669"/>
    <property type="project" value="UniProtKB-KW"/>
</dbReference>
<dbReference type="InterPro" id="IPR012627">
    <property type="entry name" value="Toxin_22"/>
</dbReference>
<dbReference type="Pfam" id="PF08092">
    <property type="entry name" value="Toxin_22"/>
    <property type="match status" value="1"/>
</dbReference>
<organism>
    <name type="scientific">Trittame loki</name>
    <name type="common">Brush-footed trapdoor spider</name>
    <dbReference type="NCBI Taxonomy" id="1295018"/>
    <lineage>
        <taxon>Eukaryota</taxon>
        <taxon>Metazoa</taxon>
        <taxon>Ecdysozoa</taxon>
        <taxon>Arthropoda</taxon>
        <taxon>Chelicerata</taxon>
        <taxon>Arachnida</taxon>
        <taxon>Araneae</taxon>
        <taxon>Mygalomorphae</taxon>
        <taxon>Barychelidae</taxon>
        <taxon>Trittame</taxon>
    </lineage>
</organism>
<reference key="1">
    <citation type="journal article" date="2013" name="Toxins">
        <title>A proteomics and transcriptomics investigation of the venom from the barychelid spider Trittame loki (brush-foot trapdoor).</title>
        <authorList>
            <person name="Undheim E.A."/>
            <person name="Sunagar K."/>
            <person name="Herzig V."/>
            <person name="Kely L."/>
            <person name="Low D.H."/>
            <person name="Jackson T.N."/>
            <person name="Jones A."/>
            <person name="Kurniawan N."/>
            <person name="King G.F."/>
            <person name="Ali S.A."/>
            <person name="Antunes A."/>
            <person name="Ruder T."/>
            <person name="Fry B.G."/>
        </authorList>
    </citation>
    <scope>NUCLEOTIDE SEQUENCE [MRNA]</scope>
    <source>
        <tissue>Venom gland</tissue>
    </source>
</reference>
<proteinExistence type="evidence at transcript level"/>
<comment type="function">
    <text evidence="3">Ion channel inhibitor.</text>
</comment>
<comment type="subcellular location">
    <subcellularLocation>
        <location evidence="1">Secreted</location>
    </subcellularLocation>
</comment>
<comment type="tissue specificity">
    <text>Expressed by the venom gland.</text>
</comment>
<comment type="domain">
    <text evidence="1">The presence of a 'disulfide through disulfide knot' structurally defines this protein as a knottin.</text>
</comment>
<comment type="similarity">
    <text evidence="3">Belongs to the neurotoxin 14 (magi-1) family. 06 (ICK-Trit) subfamily.</text>
</comment>
<accession>W4VRW4</accession>
<protein>
    <recommendedName>
        <fullName>U16-barytoxin-Tl1a</fullName>
        <shortName>U16-BATX-Tl1a</shortName>
    </recommendedName>
    <alternativeName>
        <fullName>Toxin ICK-32</fullName>
    </alternativeName>
</protein>
<evidence type="ECO:0000250" key="1"/>
<evidence type="ECO:0000255" key="2"/>
<evidence type="ECO:0000305" key="3"/>